<keyword id="KW-0067">ATP-binding</keyword>
<keyword id="KW-0418">Kinase</keyword>
<keyword id="KW-0545">Nucleotide biosynthesis</keyword>
<keyword id="KW-0547">Nucleotide-binding</keyword>
<keyword id="KW-1185">Reference proteome</keyword>
<keyword id="KW-0808">Transferase</keyword>
<accession>O26009</accession>
<dbReference type="EC" id="2.7.4.9"/>
<dbReference type="EMBL" id="AE000511">
    <property type="protein sequence ID" value="AAD08513.1"/>
    <property type="molecule type" value="Genomic_DNA"/>
</dbReference>
<dbReference type="PIR" id="B64704">
    <property type="entry name" value="B64704"/>
</dbReference>
<dbReference type="RefSeq" id="NP_208265.1">
    <property type="nucleotide sequence ID" value="NC_000915.1"/>
</dbReference>
<dbReference type="RefSeq" id="WP_000289698.1">
    <property type="nucleotide sequence ID" value="NC_018939.1"/>
</dbReference>
<dbReference type="SMR" id="O26009"/>
<dbReference type="DIP" id="DIP-3553N"/>
<dbReference type="FunCoup" id="O26009">
    <property type="interactions" value="326"/>
</dbReference>
<dbReference type="IntAct" id="O26009">
    <property type="interactions" value="1"/>
</dbReference>
<dbReference type="MINT" id="O26009"/>
<dbReference type="STRING" id="85962.HP_1474"/>
<dbReference type="PaxDb" id="85962-C694_07630"/>
<dbReference type="EnsemblBacteria" id="AAD08513">
    <property type="protein sequence ID" value="AAD08513"/>
    <property type="gene ID" value="HP_1474"/>
</dbReference>
<dbReference type="KEGG" id="heo:C694_07630"/>
<dbReference type="KEGG" id="hpy:HP_1474"/>
<dbReference type="PATRIC" id="fig|85962.47.peg.1585"/>
<dbReference type="eggNOG" id="COG0125">
    <property type="taxonomic scope" value="Bacteria"/>
</dbReference>
<dbReference type="InParanoid" id="O26009"/>
<dbReference type="OrthoDB" id="9774907at2"/>
<dbReference type="PhylomeDB" id="O26009"/>
<dbReference type="Proteomes" id="UP000000429">
    <property type="component" value="Chromosome"/>
</dbReference>
<dbReference type="GO" id="GO:0005737">
    <property type="term" value="C:cytoplasm"/>
    <property type="evidence" value="ECO:0000318"/>
    <property type="project" value="GO_Central"/>
</dbReference>
<dbReference type="GO" id="GO:0005829">
    <property type="term" value="C:cytosol"/>
    <property type="evidence" value="ECO:0000318"/>
    <property type="project" value="GO_Central"/>
</dbReference>
<dbReference type="GO" id="GO:0005524">
    <property type="term" value="F:ATP binding"/>
    <property type="evidence" value="ECO:0007669"/>
    <property type="project" value="UniProtKB-UniRule"/>
</dbReference>
<dbReference type="GO" id="GO:0004798">
    <property type="term" value="F:dTMP kinase activity"/>
    <property type="evidence" value="ECO:0000318"/>
    <property type="project" value="GO_Central"/>
</dbReference>
<dbReference type="GO" id="GO:0006233">
    <property type="term" value="P:dTDP biosynthetic process"/>
    <property type="evidence" value="ECO:0000318"/>
    <property type="project" value="GO_Central"/>
</dbReference>
<dbReference type="GO" id="GO:0006235">
    <property type="term" value="P:dTTP biosynthetic process"/>
    <property type="evidence" value="ECO:0000318"/>
    <property type="project" value="GO_Central"/>
</dbReference>
<dbReference type="GO" id="GO:0006227">
    <property type="term" value="P:dUDP biosynthetic process"/>
    <property type="evidence" value="ECO:0000318"/>
    <property type="project" value="GO_Central"/>
</dbReference>
<dbReference type="CDD" id="cd01672">
    <property type="entry name" value="TMPK"/>
    <property type="match status" value="1"/>
</dbReference>
<dbReference type="FunFam" id="3.40.50.300:FF:003325">
    <property type="entry name" value="Thymidylate kinase"/>
    <property type="match status" value="1"/>
</dbReference>
<dbReference type="Gene3D" id="3.40.50.300">
    <property type="entry name" value="P-loop containing nucleotide triphosphate hydrolases"/>
    <property type="match status" value="1"/>
</dbReference>
<dbReference type="HAMAP" id="MF_00165">
    <property type="entry name" value="Thymidylate_kinase"/>
    <property type="match status" value="1"/>
</dbReference>
<dbReference type="InterPro" id="IPR027417">
    <property type="entry name" value="P-loop_NTPase"/>
</dbReference>
<dbReference type="InterPro" id="IPR039430">
    <property type="entry name" value="Thymidylate_kin-like_dom"/>
</dbReference>
<dbReference type="InterPro" id="IPR018095">
    <property type="entry name" value="Thymidylate_kin_CS"/>
</dbReference>
<dbReference type="InterPro" id="IPR018094">
    <property type="entry name" value="Thymidylate_kinase"/>
</dbReference>
<dbReference type="NCBIfam" id="TIGR00041">
    <property type="entry name" value="DTMP_kinase"/>
    <property type="match status" value="1"/>
</dbReference>
<dbReference type="PANTHER" id="PTHR10344">
    <property type="entry name" value="THYMIDYLATE KINASE"/>
    <property type="match status" value="1"/>
</dbReference>
<dbReference type="PANTHER" id="PTHR10344:SF4">
    <property type="entry name" value="UMP-CMP KINASE 2, MITOCHONDRIAL"/>
    <property type="match status" value="1"/>
</dbReference>
<dbReference type="Pfam" id="PF02223">
    <property type="entry name" value="Thymidylate_kin"/>
    <property type="match status" value="1"/>
</dbReference>
<dbReference type="SUPFAM" id="SSF52540">
    <property type="entry name" value="P-loop containing nucleoside triphosphate hydrolases"/>
    <property type="match status" value="1"/>
</dbReference>
<dbReference type="PROSITE" id="PS01331">
    <property type="entry name" value="THYMIDYLATE_KINASE"/>
    <property type="match status" value="1"/>
</dbReference>
<comment type="function">
    <text evidence="1">Phosphorylation of dTMP to form dTDP in both de novo and salvage pathways of dTTP synthesis.</text>
</comment>
<comment type="catalytic activity">
    <reaction>
        <text>dTMP + ATP = dTDP + ADP</text>
        <dbReference type="Rhea" id="RHEA:13517"/>
        <dbReference type="ChEBI" id="CHEBI:30616"/>
        <dbReference type="ChEBI" id="CHEBI:58369"/>
        <dbReference type="ChEBI" id="CHEBI:63528"/>
        <dbReference type="ChEBI" id="CHEBI:456216"/>
        <dbReference type="EC" id="2.7.4.9"/>
    </reaction>
</comment>
<comment type="interaction">
    <interactant intactId="EBI-528054">
        <id>O26009</id>
    </interactant>
    <interactant intactId="EBI-528040">
        <id>O25533</id>
        <label>coaX</label>
    </interactant>
    <organismsDiffer>false</organismsDiffer>
    <experiments>2</experiments>
</comment>
<comment type="similarity">
    <text evidence="3">Belongs to the thymidylate kinase family.</text>
</comment>
<protein>
    <recommendedName>
        <fullName>Thymidylate kinase</fullName>
        <ecNumber>2.7.4.9</ecNumber>
    </recommendedName>
    <alternativeName>
        <fullName>dTMP kinase</fullName>
    </alternativeName>
</protein>
<gene>
    <name type="primary">tmk</name>
    <name type="ordered locus">HP_1474</name>
</gene>
<evidence type="ECO:0000250" key="1"/>
<evidence type="ECO:0000255" key="2"/>
<evidence type="ECO:0000305" key="3"/>
<feature type="chain" id="PRO_0000155283" description="Thymidylate kinase">
    <location>
        <begin position="1"/>
        <end position="191"/>
    </location>
</feature>
<feature type="binding site" evidence="2">
    <location>
        <begin position="7"/>
        <end position="14"/>
    </location>
    <ligand>
        <name>ATP</name>
        <dbReference type="ChEBI" id="CHEBI:30616"/>
    </ligand>
</feature>
<reference key="1">
    <citation type="journal article" date="1997" name="Nature">
        <title>The complete genome sequence of the gastric pathogen Helicobacter pylori.</title>
        <authorList>
            <person name="Tomb J.-F."/>
            <person name="White O."/>
            <person name="Kerlavage A.R."/>
            <person name="Clayton R.A."/>
            <person name="Sutton G.G."/>
            <person name="Fleischmann R.D."/>
            <person name="Ketchum K.A."/>
            <person name="Klenk H.-P."/>
            <person name="Gill S.R."/>
            <person name="Dougherty B.A."/>
            <person name="Nelson K.E."/>
            <person name="Quackenbush J."/>
            <person name="Zhou L."/>
            <person name="Kirkness E.F."/>
            <person name="Peterson S.N."/>
            <person name="Loftus B.J."/>
            <person name="Richardson D.L."/>
            <person name="Dodson R.J."/>
            <person name="Khalak H.G."/>
            <person name="Glodek A."/>
            <person name="McKenney K."/>
            <person name="FitzGerald L.M."/>
            <person name="Lee N."/>
            <person name="Adams M.D."/>
            <person name="Hickey E.K."/>
            <person name="Berg D.E."/>
            <person name="Gocayne J.D."/>
            <person name="Utterback T.R."/>
            <person name="Peterson J.D."/>
            <person name="Kelley J.M."/>
            <person name="Cotton M.D."/>
            <person name="Weidman J.F."/>
            <person name="Fujii C."/>
            <person name="Bowman C."/>
            <person name="Watthey L."/>
            <person name="Wallin E."/>
            <person name="Hayes W.S."/>
            <person name="Borodovsky M."/>
            <person name="Karp P.D."/>
            <person name="Smith H.O."/>
            <person name="Fraser C.M."/>
            <person name="Venter J.C."/>
        </authorList>
    </citation>
    <scope>NUCLEOTIDE SEQUENCE [LARGE SCALE GENOMIC DNA]</scope>
    <source>
        <strain>ATCC 700392 / 26695</strain>
    </source>
</reference>
<name>KTHY_HELPY</name>
<sequence>MYVVLEGVDGAGKSTQVELLKDRFKNALFTKEPGGTRMGESLRRIALNENISELARAFLFLSDRAEHTESVIKPALKEKKLIISDRSLISGMAYSQFSSLELNLLATQSVLPAKIILLLIDKEGLKQRLSLKSLDKIENQGIEKLLHIQQKLKTHAYALQEKFGCEVLELDAKESVKNLHEKIAAFIKCAV</sequence>
<proteinExistence type="evidence at protein level"/>
<organism>
    <name type="scientific">Helicobacter pylori (strain ATCC 700392 / 26695)</name>
    <name type="common">Campylobacter pylori</name>
    <dbReference type="NCBI Taxonomy" id="85962"/>
    <lineage>
        <taxon>Bacteria</taxon>
        <taxon>Pseudomonadati</taxon>
        <taxon>Campylobacterota</taxon>
        <taxon>Epsilonproteobacteria</taxon>
        <taxon>Campylobacterales</taxon>
        <taxon>Helicobacteraceae</taxon>
        <taxon>Helicobacter</taxon>
    </lineage>
</organism>